<comment type="function">
    <text>Possible role in synthesis of the nonaprenyl side chain of plastoquinone or in synthesis of other prenyl chains such as undekaprenyl pyrophosphate.</text>
</comment>
<comment type="cofactor">
    <cofactor evidence="1">
        <name>Mg(2+)</name>
        <dbReference type="ChEBI" id="CHEBI:18420"/>
    </cofactor>
    <text evidence="1">Binds 2 Mg(2+) ions per subunit.</text>
</comment>
<comment type="subcellular location">
    <subcellularLocation>
        <location>Plastid</location>
        <location>Chloroplast</location>
    </subcellularLocation>
</comment>
<comment type="similarity">
    <text evidence="4">Belongs to the FPP/GGPP synthase family.</text>
</comment>
<accession>Q9TLS1</accession>
<geneLocation type="chloroplast"/>
<sequence>MKVNSKTLQSVKEDLLNIEQTLNKLIKVNNPILSAAAKHLLIVESKKIRPAIVLLVAKAIDKNKKIKTSQQRLAEVTEIIHTATLLHDDVVDESIIRRGTKSVNKTFGNKIAVFAGDFLFAQSSWYLANINNLEVVKAISKVITDLAEGELQQNLTQFNTYYSIIKYLEKSFNKTASLIAASCKSCCLLSDFDQSLNSKFYNYGKNLGLAFQIIDDILDITSSSTALGKMTTSDLKLGNLTAPVLFALTKNSKLFKIIEREFCEKSDISEAINIIKETNAIEESFDLAYEHIEAAINSIKDLPTSSEKDSLIEIAYDLLNRYK</sequence>
<reference key="1">
    <citation type="journal article" date="2000" name="J. Mol. Evol.">
        <title>The structure and gene repertoire of an ancient red algal plastid genome.</title>
        <authorList>
            <person name="Gloeckner G."/>
            <person name="Rosenthal A."/>
            <person name="Valentin K.-U."/>
        </authorList>
    </citation>
    <scope>NUCLEOTIDE SEQUENCE [LARGE SCALE GENOMIC DNA]</scope>
    <source>
        <strain>RK-1</strain>
    </source>
</reference>
<name>PREA_CYACA</name>
<evidence type="ECO:0000250" key="1"/>
<evidence type="ECO:0000250" key="2">
    <source>
        <dbReference type="UniProtKB" id="P14324"/>
    </source>
</evidence>
<evidence type="ECO:0000250" key="3">
    <source>
        <dbReference type="UniProtKB" id="Q12051"/>
    </source>
</evidence>
<evidence type="ECO:0000305" key="4"/>
<dbReference type="EC" id="2.5.1.-"/>
<dbReference type="EMBL" id="AF022186">
    <property type="protein sequence ID" value="AAF12896.1"/>
    <property type="molecule type" value="Genomic_DNA"/>
</dbReference>
<dbReference type="RefSeq" id="NP_045198.1">
    <property type="nucleotide sequence ID" value="NC_001840.1"/>
</dbReference>
<dbReference type="SMR" id="Q9TLS1"/>
<dbReference type="GeneID" id="800126"/>
<dbReference type="GO" id="GO:0009507">
    <property type="term" value="C:chloroplast"/>
    <property type="evidence" value="ECO:0007669"/>
    <property type="project" value="UniProtKB-SubCell"/>
</dbReference>
<dbReference type="GO" id="GO:0046872">
    <property type="term" value="F:metal ion binding"/>
    <property type="evidence" value="ECO:0007669"/>
    <property type="project" value="UniProtKB-KW"/>
</dbReference>
<dbReference type="GO" id="GO:0004659">
    <property type="term" value="F:prenyltransferase activity"/>
    <property type="evidence" value="ECO:0007669"/>
    <property type="project" value="InterPro"/>
</dbReference>
<dbReference type="GO" id="GO:0008299">
    <property type="term" value="P:isoprenoid biosynthetic process"/>
    <property type="evidence" value="ECO:0007669"/>
    <property type="project" value="UniProtKB-KW"/>
</dbReference>
<dbReference type="GO" id="GO:0015979">
    <property type="term" value="P:photosynthesis"/>
    <property type="evidence" value="ECO:0007669"/>
    <property type="project" value="UniProtKB-KW"/>
</dbReference>
<dbReference type="GO" id="GO:1901663">
    <property type="term" value="P:quinone biosynthetic process"/>
    <property type="evidence" value="ECO:0007669"/>
    <property type="project" value="UniProtKB-ARBA"/>
</dbReference>
<dbReference type="CDD" id="cd00685">
    <property type="entry name" value="Trans_IPPS_HT"/>
    <property type="match status" value="1"/>
</dbReference>
<dbReference type="Gene3D" id="1.10.600.10">
    <property type="entry name" value="Farnesyl Diphosphate Synthase"/>
    <property type="match status" value="1"/>
</dbReference>
<dbReference type="InterPro" id="IPR008949">
    <property type="entry name" value="Isoprenoid_synthase_dom_sf"/>
</dbReference>
<dbReference type="InterPro" id="IPR000092">
    <property type="entry name" value="Polyprenyl_synt"/>
</dbReference>
<dbReference type="InterPro" id="IPR033749">
    <property type="entry name" value="Polyprenyl_synt_CS"/>
</dbReference>
<dbReference type="NCBIfam" id="TIGR02749">
    <property type="entry name" value="prenyl_cyano"/>
    <property type="match status" value="1"/>
</dbReference>
<dbReference type="PANTHER" id="PTHR12001:SF69">
    <property type="entry name" value="ALL TRANS-POLYPRENYL-DIPHOSPHATE SYNTHASE PDSS1"/>
    <property type="match status" value="1"/>
</dbReference>
<dbReference type="PANTHER" id="PTHR12001">
    <property type="entry name" value="GERANYLGERANYL PYROPHOSPHATE SYNTHASE"/>
    <property type="match status" value="1"/>
</dbReference>
<dbReference type="Pfam" id="PF00348">
    <property type="entry name" value="polyprenyl_synt"/>
    <property type="match status" value="1"/>
</dbReference>
<dbReference type="SFLD" id="SFLDS00005">
    <property type="entry name" value="Isoprenoid_Synthase_Type_I"/>
    <property type="match status" value="1"/>
</dbReference>
<dbReference type="SUPFAM" id="SSF48576">
    <property type="entry name" value="Terpenoid synthases"/>
    <property type="match status" value="1"/>
</dbReference>
<dbReference type="PROSITE" id="PS00723">
    <property type="entry name" value="POLYPRENYL_SYNTHASE_1"/>
    <property type="match status" value="1"/>
</dbReference>
<dbReference type="PROSITE" id="PS00444">
    <property type="entry name" value="POLYPRENYL_SYNTHASE_2"/>
    <property type="match status" value="1"/>
</dbReference>
<keyword id="KW-0150">Chloroplast</keyword>
<keyword id="KW-0414">Isoprene biosynthesis</keyword>
<keyword id="KW-0460">Magnesium</keyword>
<keyword id="KW-0479">Metal-binding</keyword>
<keyword id="KW-0602">Photosynthesis</keyword>
<keyword id="KW-0934">Plastid</keyword>
<keyword id="KW-0808">Transferase</keyword>
<gene>
    <name type="primary">preA</name>
</gene>
<feature type="chain" id="PRO_0000123999" description="Prenyl transferase">
    <location>
        <begin position="1"/>
        <end position="323"/>
    </location>
</feature>
<feature type="binding site" evidence="2">
    <location>
        <position position="46"/>
    </location>
    <ligand>
        <name>isopentenyl diphosphate</name>
        <dbReference type="ChEBI" id="CHEBI:128769"/>
    </ligand>
</feature>
<feature type="binding site" evidence="2">
    <location>
        <position position="49"/>
    </location>
    <ligand>
        <name>isopentenyl diphosphate</name>
        <dbReference type="ChEBI" id="CHEBI:128769"/>
    </ligand>
</feature>
<feature type="binding site" evidence="3">
    <location>
        <position position="81"/>
    </location>
    <ligand>
        <name>isopentenyl diphosphate</name>
        <dbReference type="ChEBI" id="CHEBI:128769"/>
    </ligand>
</feature>
<feature type="binding site" evidence="2">
    <location>
        <position position="88"/>
    </location>
    <ligand>
        <name>Mg(2+)</name>
        <dbReference type="ChEBI" id="CHEBI:18420"/>
        <label>1</label>
    </ligand>
</feature>
<feature type="binding site" evidence="2">
    <location>
        <position position="88"/>
    </location>
    <ligand>
        <name>Mg(2+)</name>
        <dbReference type="ChEBI" id="CHEBI:18420"/>
        <label>2</label>
    </ligand>
</feature>
<feature type="binding site" evidence="2">
    <location>
        <position position="92"/>
    </location>
    <ligand>
        <name>Mg(2+)</name>
        <dbReference type="ChEBI" id="CHEBI:18420"/>
        <label>1</label>
    </ligand>
</feature>
<feature type="binding site" evidence="2">
    <location>
        <position position="92"/>
    </location>
    <ligand>
        <name>Mg(2+)</name>
        <dbReference type="ChEBI" id="CHEBI:18420"/>
        <label>2</label>
    </ligand>
</feature>
<feature type="binding site" evidence="1">
    <location>
        <position position="97"/>
    </location>
    <ligand>
        <name>an all-trans-polyprenyl diphosphate</name>
        <dbReference type="ChEBI" id="CHEBI:58914"/>
    </ligand>
</feature>
<feature type="binding site" evidence="2">
    <location>
        <position position="98"/>
    </location>
    <ligand>
        <name>isopentenyl diphosphate</name>
        <dbReference type="ChEBI" id="CHEBI:128769"/>
    </ligand>
</feature>
<feature type="binding site" evidence="1">
    <location>
        <position position="174"/>
    </location>
    <ligand>
        <name>an all-trans-polyprenyl diphosphate</name>
        <dbReference type="ChEBI" id="CHEBI:58914"/>
    </ligand>
</feature>
<feature type="binding site" evidence="1">
    <location>
        <position position="175"/>
    </location>
    <ligand>
        <name>an all-trans-polyprenyl diphosphate</name>
        <dbReference type="ChEBI" id="CHEBI:58914"/>
    </ligand>
</feature>
<feature type="binding site" evidence="1">
    <location>
        <position position="212"/>
    </location>
    <ligand>
        <name>an all-trans-polyprenyl diphosphate</name>
        <dbReference type="ChEBI" id="CHEBI:58914"/>
    </ligand>
</feature>
<protein>
    <recommendedName>
        <fullName>Prenyl transferase</fullName>
        <ecNumber>2.5.1.-</ecNumber>
    </recommendedName>
</protein>
<organism>
    <name type="scientific">Cyanidium caldarium</name>
    <name type="common">Red alga</name>
    <dbReference type="NCBI Taxonomy" id="2771"/>
    <lineage>
        <taxon>Eukaryota</taxon>
        <taxon>Rhodophyta</taxon>
        <taxon>Bangiophyceae</taxon>
        <taxon>Cyanidiales</taxon>
        <taxon>Cyanidiaceae</taxon>
        <taxon>Cyanidium</taxon>
    </lineage>
</organism>
<proteinExistence type="inferred from homology"/>